<keyword id="KW-0614">Plasmid</keyword>
<keyword id="KW-1185">Reference proteome</keyword>
<dbReference type="EMBL" id="AL591985">
    <property type="protein sequence ID" value="CAC49306.2"/>
    <property type="molecule type" value="Genomic_DNA"/>
</dbReference>
<dbReference type="PIR" id="B95955">
    <property type="entry name" value="B95955"/>
</dbReference>
<dbReference type="RefSeq" id="NP_437446.2">
    <property type="nucleotide sequence ID" value="NC_003078.1"/>
</dbReference>
<dbReference type="RefSeq" id="WP_003528984.1">
    <property type="nucleotide sequence ID" value="NC_003078.1"/>
</dbReference>
<dbReference type="SMR" id="Q92V27"/>
<dbReference type="EnsemblBacteria" id="CAC49306">
    <property type="protein sequence ID" value="CAC49306"/>
    <property type="gene ID" value="SM_b21330"/>
</dbReference>
<dbReference type="KEGG" id="sme:SM_b21330"/>
<dbReference type="PATRIC" id="fig|266834.11.peg.5834"/>
<dbReference type="eggNOG" id="COG3237">
    <property type="taxonomic scope" value="Bacteria"/>
</dbReference>
<dbReference type="HOGENOM" id="CLU_135567_4_1_5"/>
<dbReference type="OrthoDB" id="9796058at2"/>
<dbReference type="PRO" id="PR:Q92V27"/>
<dbReference type="Proteomes" id="UP000001976">
    <property type="component" value="Plasmid pSymB"/>
</dbReference>
<dbReference type="Gene3D" id="1.10.1470.10">
    <property type="entry name" value="YjbJ"/>
    <property type="match status" value="1"/>
</dbReference>
<dbReference type="InterPro" id="IPR008462">
    <property type="entry name" value="CsbD"/>
</dbReference>
<dbReference type="InterPro" id="IPR050423">
    <property type="entry name" value="UPF0337_stress_rsp"/>
</dbReference>
<dbReference type="InterPro" id="IPR026042">
    <property type="entry name" value="YjbJ"/>
</dbReference>
<dbReference type="InterPro" id="IPR036629">
    <property type="entry name" value="YjbJ_sf"/>
</dbReference>
<dbReference type="PANTHER" id="PTHR34977">
    <property type="entry name" value="UPF0337 PROTEIN YJBJ"/>
    <property type="match status" value="1"/>
</dbReference>
<dbReference type="PANTHER" id="PTHR34977:SF1">
    <property type="entry name" value="UPF0337 PROTEIN YJBJ"/>
    <property type="match status" value="1"/>
</dbReference>
<dbReference type="Pfam" id="PF05532">
    <property type="entry name" value="CsbD"/>
    <property type="match status" value="1"/>
</dbReference>
<dbReference type="PIRSF" id="PIRSF039008">
    <property type="entry name" value="YjbJ"/>
    <property type="match status" value="1"/>
</dbReference>
<dbReference type="SUPFAM" id="SSF69047">
    <property type="entry name" value="Hypothetical protein YjbJ"/>
    <property type="match status" value="1"/>
</dbReference>
<proteinExistence type="inferred from homology"/>
<name>Y5606_RHIME</name>
<reference key="1">
    <citation type="journal article" date="2001" name="Proc. Natl. Acad. Sci. U.S.A.">
        <title>The complete sequence of the 1,683-kb pSymB megaplasmid from the N2-fixing endosymbiont Sinorhizobium meliloti.</title>
        <authorList>
            <person name="Finan T.M."/>
            <person name="Weidner S."/>
            <person name="Wong K."/>
            <person name="Buhrmester J."/>
            <person name="Chain P."/>
            <person name="Vorhoelter F.J."/>
            <person name="Hernandez-Lucas I."/>
            <person name="Becker A."/>
            <person name="Cowie A."/>
            <person name="Gouzy J."/>
            <person name="Golding B."/>
            <person name="Puehler A."/>
        </authorList>
    </citation>
    <scope>NUCLEOTIDE SEQUENCE [LARGE SCALE GENOMIC DNA]</scope>
    <source>
        <strain>1021</strain>
    </source>
</reference>
<reference key="2">
    <citation type="journal article" date="2001" name="Science">
        <title>The composite genome of the legume symbiont Sinorhizobium meliloti.</title>
        <authorList>
            <person name="Galibert F."/>
            <person name="Finan T.M."/>
            <person name="Long S.R."/>
            <person name="Puehler A."/>
            <person name="Abola P."/>
            <person name="Ampe F."/>
            <person name="Barloy-Hubler F."/>
            <person name="Barnett M.J."/>
            <person name="Becker A."/>
            <person name="Boistard P."/>
            <person name="Bothe G."/>
            <person name="Boutry M."/>
            <person name="Bowser L."/>
            <person name="Buhrmester J."/>
            <person name="Cadieu E."/>
            <person name="Capela D."/>
            <person name="Chain P."/>
            <person name="Cowie A."/>
            <person name="Davis R.W."/>
            <person name="Dreano S."/>
            <person name="Federspiel N.A."/>
            <person name="Fisher R.F."/>
            <person name="Gloux S."/>
            <person name="Godrie T."/>
            <person name="Goffeau A."/>
            <person name="Golding B."/>
            <person name="Gouzy J."/>
            <person name="Gurjal M."/>
            <person name="Hernandez-Lucas I."/>
            <person name="Hong A."/>
            <person name="Huizar L."/>
            <person name="Hyman R.W."/>
            <person name="Jones T."/>
            <person name="Kahn D."/>
            <person name="Kahn M.L."/>
            <person name="Kalman S."/>
            <person name="Keating D.H."/>
            <person name="Kiss E."/>
            <person name="Komp C."/>
            <person name="Lelaure V."/>
            <person name="Masuy D."/>
            <person name="Palm C."/>
            <person name="Peck M.C."/>
            <person name="Pohl T.M."/>
            <person name="Portetelle D."/>
            <person name="Purnelle B."/>
            <person name="Ramsperger U."/>
            <person name="Surzycki R."/>
            <person name="Thebault P."/>
            <person name="Vandenbol M."/>
            <person name="Vorhoelter F.J."/>
            <person name="Weidner S."/>
            <person name="Wells D.H."/>
            <person name="Wong K."/>
            <person name="Yeh K.-C."/>
            <person name="Batut J."/>
        </authorList>
    </citation>
    <scope>NUCLEOTIDE SEQUENCE [LARGE SCALE GENOMIC DNA]</scope>
    <source>
        <strain>1021</strain>
    </source>
</reference>
<evidence type="ECO:0000305" key="1"/>
<protein>
    <recommendedName>
        <fullName>UPF0337 protein RB0906</fullName>
    </recommendedName>
</protein>
<sequence>MDWNRVEGNWKQVKGKVKEQWGKLTDDDLDQISGSREQLEGKIQERYGIEKDRVRRDIDDWYGRQTWNW</sequence>
<feature type="chain" id="PRO_0000210024" description="UPF0337 protein RB0906">
    <location>
        <begin position="1"/>
        <end position="69"/>
    </location>
</feature>
<accession>Q92V27</accession>
<organism>
    <name type="scientific">Rhizobium meliloti (strain 1021)</name>
    <name type="common">Ensifer meliloti</name>
    <name type="synonym">Sinorhizobium meliloti</name>
    <dbReference type="NCBI Taxonomy" id="266834"/>
    <lineage>
        <taxon>Bacteria</taxon>
        <taxon>Pseudomonadati</taxon>
        <taxon>Pseudomonadota</taxon>
        <taxon>Alphaproteobacteria</taxon>
        <taxon>Hyphomicrobiales</taxon>
        <taxon>Rhizobiaceae</taxon>
        <taxon>Sinorhizobium/Ensifer group</taxon>
        <taxon>Sinorhizobium</taxon>
    </lineage>
</organism>
<comment type="similarity">
    <text evidence="1">Belongs to the UPF0337 (CsbD) family.</text>
</comment>
<geneLocation type="plasmid">
    <name>pSymB</name>
    <name>megaplasmid 2</name>
</geneLocation>
<gene>
    <name type="ordered locus">RB0906</name>
    <name type="ORF">SMb21330</name>
</gene>